<evidence type="ECO:0000255" key="1">
    <source>
        <dbReference type="HAMAP-Rule" id="MF_00176"/>
    </source>
</evidence>
<dbReference type="EC" id="6.1.1.11" evidence="1"/>
<dbReference type="EMBL" id="CP000124">
    <property type="protein sequence ID" value="ABA50743.1"/>
    <property type="molecule type" value="Genomic_DNA"/>
</dbReference>
<dbReference type="RefSeq" id="WP_004186129.1">
    <property type="nucleotide sequence ID" value="NC_007434.1"/>
</dbReference>
<dbReference type="SMR" id="Q3JPQ8"/>
<dbReference type="EnsemblBacteria" id="ABA50743">
    <property type="protein sequence ID" value="ABA50743"/>
    <property type="gene ID" value="BURPS1710b_3072"/>
</dbReference>
<dbReference type="GeneID" id="93061177"/>
<dbReference type="KEGG" id="bpm:BURPS1710b_3072"/>
<dbReference type="HOGENOM" id="CLU_023797_1_1_4"/>
<dbReference type="UniPathway" id="UPA00906">
    <property type="reaction ID" value="UER00895"/>
</dbReference>
<dbReference type="Proteomes" id="UP000002700">
    <property type="component" value="Chromosome I"/>
</dbReference>
<dbReference type="GO" id="GO:0005737">
    <property type="term" value="C:cytoplasm"/>
    <property type="evidence" value="ECO:0007669"/>
    <property type="project" value="UniProtKB-SubCell"/>
</dbReference>
<dbReference type="GO" id="GO:0005524">
    <property type="term" value="F:ATP binding"/>
    <property type="evidence" value="ECO:0007669"/>
    <property type="project" value="UniProtKB-UniRule"/>
</dbReference>
<dbReference type="GO" id="GO:0004828">
    <property type="term" value="F:serine-tRNA ligase activity"/>
    <property type="evidence" value="ECO:0007669"/>
    <property type="project" value="UniProtKB-UniRule"/>
</dbReference>
<dbReference type="GO" id="GO:0016260">
    <property type="term" value="P:selenocysteine biosynthetic process"/>
    <property type="evidence" value="ECO:0007669"/>
    <property type="project" value="UniProtKB-UniRule"/>
</dbReference>
<dbReference type="GO" id="GO:0006434">
    <property type="term" value="P:seryl-tRNA aminoacylation"/>
    <property type="evidence" value="ECO:0007669"/>
    <property type="project" value="UniProtKB-UniRule"/>
</dbReference>
<dbReference type="CDD" id="cd00770">
    <property type="entry name" value="SerRS_core"/>
    <property type="match status" value="1"/>
</dbReference>
<dbReference type="Gene3D" id="3.30.930.10">
    <property type="entry name" value="Bira Bifunctional Protein, Domain 2"/>
    <property type="match status" value="1"/>
</dbReference>
<dbReference type="Gene3D" id="1.10.287.40">
    <property type="entry name" value="Serine-tRNA synthetase, tRNA binding domain"/>
    <property type="match status" value="1"/>
</dbReference>
<dbReference type="HAMAP" id="MF_00176">
    <property type="entry name" value="Ser_tRNA_synth_type1"/>
    <property type="match status" value="1"/>
</dbReference>
<dbReference type="InterPro" id="IPR002314">
    <property type="entry name" value="aa-tRNA-synt_IIb"/>
</dbReference>
<dbReference type="InterPro" id="IPR006195">
    <property type="entry name" value="aa-tRNA-synth_II"/>
</dbReference>
<dbReference type="InterPro" id="IPR045864">
    <property type="entry name" value="aa-tRNA-synth_II/BPL/LPL"/>
</dbReference>
<dbReference type="InterPro" id="IPR002317">
    <property type="entry name" value="Ser-tRNA-ligase_type_1"/>
</dbReference>
<dbReference type="InterPro" id="IPR015866">
    <property type="entry name" value="Ser-tRNA-synth_1_N"/>
</dbReference>
<dbReference type="InterPro" id="IPR042103">
    <property type="entry name" value="SerRS_1_N_sf"/>
</dbReference>
<dbReference type="InterPro" id="IPR033729">
    <property type="entry name" value="SerRS_core"/>
</dbReference>
<dbReference type="InterPro" id="IPR010978">
    <property type="entry name" value="tRNA-bd_arm"/>
</dbReference>
<dbReference type="NCBIfam" id="TIGR00414">
    <property type="entry name" value="serS"/>
    <property type="match status" value="1"/>
</dbReference>
<dbReference type="PANTHER" id="PTHR43697:SF1">
    <property type="entry name" value="SERINE--TRNA LIGASE"/>
    <property type="match status" value="1"/>
</dbReference>
<dbReference type="PANTHER" id="PTHR43697">
    <property type="entry name" value="SERYL-TRNA SYNTHETASE"/>
    <property type="match status" value="1"/>
</dbReference>
<dbReference type="Pfam" id="PF02403">
    <property type="entry name" value="Seryl_tRNA_N"/>
    <property type="match status" value="1"/>
</dbReference>
<dbReference type="Pfam" id="PF00587">
    <property type="entry name" value="tRNA-synt_2b"/>
    <property type="match status" value="1"/>
</dbReference>
<dbReference type="PIRSF" id="PIRSF001529">
    <property type="entry name" value="Ser-tRNA-synth_IIa"/>
    <property type="match status" value="1"/>
</dbReference>
<dbReference type="PRINTS" id="PR00981">
    <property type="entry name" value="TRNASYNTHSER"/>
</dbReference>
<dbReference type="SUPFAM" id="SSF55681">
    <property type="entry name" value="Class II aaRS and biotin synthetases"/>
    <property type="match status" value="1"/>
</dbReference>
<dbReference type="SUPFAM" id="SSF46589">
    <property type="entry name" value="tRNA-binding arm"/>
    <property type="match status" value="1"/>
</dbReference>
<dbReference type="PROSITE" id="PS50862">
    <property type="entry name" value="AA_TRNA_LIGASE_II"/>
    <property type="match status" value="1"/>
</dbReference>
<reference key="1">
    <citation type="journal article" date="2010" name="Genome Biol. Evol.">
        <title>Continuing evolution of Burkholderia mallei through genome reduction and large-scale rearrangements.</title>
        <authorList>
            <person name="Losada L."/>
            <person name="Ronning C.M."/>
            <person name="DeShazer D."/>
            <person name="Woods D."/>
            <person name="Fedorova N."/>
            <person name="Kim H.S."/>
            <person name="Shabalina S.A."/>
            <person name="Pearson T.R."/>
            <person name="Brinkac L."/>
            <person name="Tan P."/>
            <person name="Nandi T."/>
            <person name="Crabtree J."/>
            <person name="Badger J."/>
            <person name="Beckstrom-Sternberg S."/>
            <person name="Saqib M."/>
            <person name="Schutzer S.E."/>
            <person name="Keim P."/>
            <person name="Nierman W.C."/>
        </authorList>
    </citation>
    <scope>NUCLEOTIDE SEQUENCE [LARGE SCALE GENOMIC DNA]</scope>
    <source>
        <strain>1710b</strain>
    </source>
</reference>
<proteinExistence type="inferred from homology"/>
<protein>
    <recommendedName>
        <fullName evidence="1">Serine--tRNA ligase</fullName>
        <ecNumber evidence="1">6.1.1.11</ecNumber>
    </recommendedName>
    <alternativeName>
        <fullName evidence="1">Seryl-tRNA synthetase</fullName>
        <shortName evidence="1">SerRS</shortName>
    </alternativeName>
    <alternativeName>
        <fullName evidence="1">Seryl-tRNA(Ser/Sec) synthetase</fullName>
    </alternativeName>
</protein>
<sequence length="433" mass="47607">MLDIQLLRKDLDGVAKRLADRGYPLDVAAFSALEAERRAIQTRTEELQARRNSLSKQIGAMKGRGEDTSAVMAEVGGIGDEMKASAVKLDEIQARLSELMLEMPNVPHESVPVGRDETENVEVRRWGAPRQFDFDVKDHVDVGTPLGLDFETGAKLSGARFTVLRGPIARLHRALAQFMLDTHTQQHGYSETYTPYIVNPDVLYGTGQLPKFAEDMFRVEKGGAENTVTQYLISTSEISLTNTVRDSIVEASALPIKLTAHSPCFRSEAGSYGRDTRGMIRQHQFDKVEMVQIVAPEASYAALDEMVGHAEAILQKLELPYRVVALCTGDMGFSAAKTFDLEVWLPAQNTYREISSCSNTESFQARRMQARFRNAQGKPELVHTLNGSGLAVGRTLVAVLENYQNADGSVTVPVALRPYMGGVERIDAPSSAA</sequence>
<feature type="chain" id="PRO_1000019633" description="Serine--tRNA ligase">
    <location>
        <begin position="1"/>
        <end position="433"/>
    </location>
</feature>
<feature type="binding site" evidence="1">
    <location>
        <begin position="235"/>
        <end position="237"/>
    </location>
    <ligand>
        <name>L-serine</name>
        <dbReference type="ChEBI" id="CHEBI:33384"/>
    </ligand>
</feature>
<feature type="binding site" evidence="1">
    <location>
        <begin position="266"/>
        <end position="268"/>
    </location>
    <ligand>
        <name>ATP</name>
        <dbReference type="ChEBI" id="CHEBI:30616"/>
    </ligand>
</feature>
<feature type="binding site" evidence="1">
    <location>
        <position position="289"/>
    </location>
    <ligand>
        <name>L-serine</name>
        <dbReference type="ChEBI" id="CHEBI:33384"/>
    </ligand>
</feature>
<feature type="binding site" evidence="1">
    <location>
        <begin position="353"/>
        <end position="356"/>
    </location>
    <ligand>
        <name>ATP</name>
        <dbReference type="ChEBI" id="CHEBI:30616"/>
    </ligand>
</feature>
<feature type="binding site" evidence="1">
    <location>
        <position position="388"/>
    </location>
    <ligand>
        <name>L-serine</name>
        <dbReference type="ChEBI" id="CHEBI:33384"/>
    </ligand>
</feature>
<keyword id="KW-0030">Aminoacyl-tRNA synthetase</keyword>
<keyword id="KW-0067">ATP-binding</keyword>
<keyword id="KW-0963">Cytoplasm</keyword>
<keyword id="KW-0436">Ligase</keyword>
<keyword id="KW-0547">Nucleotide-binding</keyword>
<keyword id="KW-0648">Protein biosynthesis</keyword>
<organism>
    <name type="scientific">Burkholderia pseudomallei (strain 1710b)</name>
    <dbReference type="NCBI Taxonomy" id="320372"/>
    <lineage>
        <taxon>Bacteria</taxon>
        <taxon>Pseudomonadati</taxon>
        <taxon>Pseudomonadota</taxon>
        <taxon>Betaproteobacteria</taxon>
        <taxon>Burkholderiales</taxon>
        <taxon>Burkholderiaceae</taxon>
        <taxon>Burkholderia</taxon>
        <taxon>pseudomallei group</taxon>
    </lineage>
</organism>
<comment type="function">
    <text evidence="1">Catalyzes the attachment of serine to tRNA(Ser). Is also able to aminoacylate tRNA(Sec) with serine, to form the misacylated tRNA L-seryl-tRNA(Sec), which will be further converted into selenocysteinyl-tRNA(Sec).</text>
</comment>
<comment type="catalytic activity">
    <reaction evidence="1">
        <text>tRNA(Ser) + L-serine + ATP = L-seryl-tRNA(Ser) + AMP + diphosphate + H(+)</text>
        <dbReference type="Rhea" id="RHEA:12292"/>
        <dbReference type="Rhea" id="RHEA-COMP:9669"/>
        <dbReference type="Rhea" id="RHEA-COMP:9703"/>
        <dbReference type="ChEBI" id="CHEBI:15378"/>
        <dbReference type="ChEBI" id="CHEBI:30616"/>
        <dbReference type="ChEBI" id="CHEBI:33019"/>
        <dbReference type="ChEBI" id="CHEBI:33384"/>
        <dbReference type="ChEBI" id="CHEBI:78442"/>
        <dbReference type="ChEBI" id="CHEBI:78533"/>
        <dbReference type="ChEBI" id="CHEBI:456215"/>
        <dbReference type="EC" id="6.1.1.11"/>
    </reaction>
</comment>
<comment type="catalytic activity">
    <reaction evidence="1">
        <text>tRNA(Sec) + L-serine + ATP = L-seryl-tRNA(Sec) + AMP + diphosphate + H(+)</text>
        <dbReference type="Rhea" id="RHEA:42580"/>
        <dbReference type="Rhea" id="RHEA-COMP:9742"/>
        <dbReference type="Rhea" id="RHEA-COMP:10128"/>
        <dbReference type="ChEBI" id="CHEBI:15378"/>
        <dbReference type="ChEBI" id="CHEBI:30616"/>
        <dbReference type="ChEBI" id="CHEBI:33019"/>
        <dbReference type="ChEBI" id="CHEBI:33384"/>
        <dbReference type="ChEBI" id="CHEBI:78442"/>
        <dbReference type="ChEBI" id="CHEBI:78533"/>
        <dbReference type="ChEBI" id="CHEBI:456215"/>
        <dbReference type="EC" id="6.1.1.11"/>
    </reaction>
</comment>
<comment type="pathway">
    <text evidence="1">Aminoacyl-tRNA biosynthesis; selenocysteinyl-tRNA(Sec) biosynthesis; L-seryl-tRNA(Sec) from L-serine and tRNA(Sec): step 1/1.</text>
</comment>
<comment type="subunit">
    <text evidence="1">Homodimer. The tRNA molecule binds across the dimer.</text>
</comment>
<comment type="subcellular location">
    <subcellularLocation>
        <location evidence="1">Cytoplasm</location>
    </subcellularLocation>
</comment>
<comment type="domain">
    <text evidence="1">Consists of two distinct domains, a catalytic core and a N-terminal extension that is involved in tRNA binding.</text>
</comment>
<comment type="similarity">
    <text evidence="1">Belongs to the class-II aminoacyl-tRNA synthetase family. Type-1 seryl-tRNA synthetase subfamily.</text>
</comment>
<accession>Q3JPQ8</accession>
<name>SYS_BURP1</name>
<gene>
    <name evidence="1" type="primary">serS</name>
    <name type="ordered locus">BURPS1710b_3072</name>
</gene>